<dbReference type="EMBL" id="D87453">
    <property type="protein sequence ID" value="BAA13394.1"/>
    <property type="status" value="ALT_INIT"/>
    <property type="molecule type" value="mRNA"/>
</dbReference>
<dbReference type="EMBL" id="AK299412">
    <property type="protein sequence ID" value="BAG61394.1"/>
    <property type="molecule type" value="mRNA"/>
</dbReference>
<dbReference type="EMBL" id="AC012609">
    <property type="status" value="NOT_ANNOTATED_CDS"/>
    <property type="molecule type" value="Genomic_DNA"/>
</dbReference>
<dbReference type="EMBL" id="AC026406">
    <property type="status" value="NOT_ANNOTATED_CDS"/>
    <property type="molecule type" value="Genomic_DNA"/>
</dbReference>
<dbReference type="EMBL" id="CH471084">
    <property type="protein sequence ID" value="EAW95701.1"/>
    <property type="molecule type" value="Genomic_DNA"/>
</dbReference>
<dbReference type="EMBL" id="BC064902">
    <property type="protein sequence ID" value="AAH64902.1"/>
    <property type="molecule type" value="mRNA"/>
</dbReference>
<dbReference type="CCDS" id="CCDS4013.1">
    <molecule id="Q92552-1"/>
</dbReference>
<dbReference type="CCDS" id="CCDS68890.1">
    <molecule id="Q92552-2"/>
</dbReference>
<dbReference type="RefSeq" id="NP_001273677.1">
    <molecule id="Q92552-2"/>
    <property type="nucleotide sequence ID" value="NM_001286748.2"/>
</dbReference>
<dbReference type="RefSeq" id="NP_055899.2">
    <molecule id="Q92552-1"/>
    <property type="nucleotide sequence ID" value="NM_015084.3"/>
</dbReference>
<dbReference type="PDB" id="3J9M">
    <property type="method" value="EM"/>
    <property type="resolution" value="3.50 A"/>
    <property type="chains" value="AV=1-414"/>
</dbReference>
<dbReference type="PDB" id="6NU2">
    <property type="method" value="EM"/>
    <property type="resolution" value="3.90 A"/>
    <property type="chains" value="AV=36-400"/>
</dbReference>
<dbReference type="PDB" id="6NU3">
    <property type="method" value="EM"/>
    <property type="resolution" value="4.40 A"/>
    <property type="chains" value="AV=1-414"/>
</dbReference>
<dbReference type="PDB" id="6RW4">
    <property type="method" value="EM"/>
    <property type="resolution" value="2.97 A"/>
    <property type="chains" value="V=1-414"/>
</dbReference>
<dbReference type="PDB" id="6RW5">
    <property type="method" value="EM"/>
    <property type="resolution" value="3.14 A"/>
    <property type="chains" value="V=1-414"/>
</dbReference>
<dbReference type="PDB" id="6VLZ">
    <property type="method" value="EM"/>
    <property type="resolution" value="2.97 A"/>
    <property type="chains" value="AV=1-414"/>
</dbReference>
<dbReference type="PDB" id="6VMI">
    <property type="method" value="EM"/>
    <property type="resolution" value="2.96 A"/>
    <property type="chains" value="AV=1-414"/>
</dbReference>
<dbReference type="PDB" id="6ZM5">
    <property type="method" value="EM"/>
    <property type="resolution" value="2.89 A"/>
    <property type="chains" value="AV=1-414"/>
</dbReference>
<dbReference type="PDB" id="6ZM6">
    <property type="method" value="EM"/>
    <property type="resolution" value="2.59 A"/>
    <property type="chains" value="AV=1-414"/>
</dbReference>
<dbReference type="PDB" id="6ZS9">
    <property type="method" value="EM"/>
    <property type="resolution" value="4.00 A"/>
    <property type="chains" value="AV=1-414"/>
</dbReference>
<dbReference type="PDB" id="6ZSA">
    <property type="method" value="EM"/>
    <property type="resolution" value="4.00 A"/>
    <property type="chains" value="AV=1-414"/>
</dbReference>
<dbReference type="PDB" id="6ZSB">
    <property type="method" value="EM"/>
    <property type="resolution" value="4.50 A"/>
    <property type="chains" value="AV=1-414"/>
</dbReference>
<dbReference type="PDB" id="6ZSC">
    <property type="method" value="EM"/>
    <property type="resolution" value="3.50 A"/>
    <property type="chains" value="AV=1-414"/>
</dbReference>
<dbReference type="PDB" id="6ZSD">
    <property type="method" value="EM"/>
    <property type="resolution" value="3.70 A"/>
    <property type="chains" value="AV=1-414"/>
</dbReference>
<dbReference type="PDB" id="6ZSE">
    <property type="method" value="EM"/>
    <property type="resolution" value="5.00 A"/>
    <property type="chains" value="AV=1-414"/>
</dbReference>
<dbReference type="PDB" id="6ZSG">
    <property type="method" value="EM"/>
    <property type="resolution" value="4.00 A"/>
    <property type="chains" value="AV=1-414"/>
</dbReference>
<dbReference type="PDB" id="7A5F">
    <property type="method" value="EM"/>
    <property type="resolution" value="4.40 A"/>
    <property type="chains" value="V6=1-414"/>
</dbReference>
<dbReference type="PDB" id="7A5G">
    <property type="method" value="EM"/>
    <property type="resolution" value="4.33 A"/>
    <property type="chains" value="V6=1-414"/>
</dbReference>
<dbReference type="PDB" id="7A5I">
    <property type="method" value="EM"/>
    <property type="resolution" value="3.70 A"/>
    <property type="chains" value="V6=1-414"/>
</dbReference>
<dbReference type="PDB" id="7A5K">
    <property type="method" value="EM"/>
    <property type="resolution" value="3.70 A"/>
    <property type="chains" value="V6=1-414"/>
</dbReference>
<dbReference type="PDB" id="7L08">
    <property type="method" value="EM"/>
    <property type="resolution" value="3.49 A"/>
    <property type="chains" value="AV=1-414"/>
</dbReference>
<dbReference type="PDB" id="7OG4">
    <property type="method" value="EM"/>
    <property type="resolution" value="3.80 A"/>
    <property type="chains" value="AV=1-414"/>
</dbReference>
<dbReference type="PDB" id="7P2E">
    <property type="method" value="EM"/>
    <property type="resolution" value="2.40 A"/>
    <property type="chains" value="V=1-414"/>
</dbReference>
<dbReference type="PDB" id="7PNX">
    <property type="method" value="EM"/>
    <property type="resolution" value="2.76 A"/>
    <property type="chains" value="V=1-414"/>
</dbReference>
<dbReference type="PDB" id="7PNY">
    <property type="method" value="EM"/>
    <property type="resolution" value="3.06 A"/>
    <property type="chains" value="V=1-414"/>
</dbReference>
<dbReference type="PDB" id="7PNZ">
    <property type="method" value="EM"/>
    <property type="resolution" value="3.09 A"/>
    <property type="chains" value="V=1-414"/>
</dbReference>
<dbReference type="PDB" id="7PO0">
    <property type="method" value="EM"/>
    <property type="resolution" value="2.90 A"/>
    <property type="chains" value="V=1-414"/>
</dbReference>
<dbReference type="PDB" id="7PO1">
    <property type="method" value="EM"/>
    <property type="resolution" value="2.92 A"/>
    <property type="chains" value="V=1-414"/>
</dbReference>
<dbReference type="PDB" id="7PO2">
    <property type="method" value="EM"/>
    <property type="resolution" value="3.09 A"/>
    <property type="chains" value="V=1-414"/>
</dbReference>
<dbReference type="PDB" id="7PO3">
    <property type="method" value="EM"/>
    <property type="resolution" value="2.92 A"/>
    <property type="chains" value="V=1-414"/>
</dbReference>
<dbReference type="PDB" id="7QI4">
    <property type="method" value="EM"/>
    <property type="resolution" value="2.21 A"/>
    <property type="chains" value="AV=1-414"/>
</dbReference>
<dbReference type="PDB" id="7QI5">
    <property type="method" value="EM"/>
    <property type="resolution" value="2.63 A"/>
    <property type="chains" value="AV=1-414"/>
</dbReference>
<dbReference type="PDB" id="7QI6">
    <property type="method" value="EM"/>
    <property type="resolution" value="2.98 A"/>
    <property type="chains" value="AV=1-414"/>
</dbReference>
<dbReference type="PDB" id="8ANY">
    <property type="method" value="EM"/>
    <property type="resolution" value="2.85 A"/>
    <property type="chains" value="AV=1-414"/>
</dbReference>
<dbReference type="PDB" id="8CSP">
    <property type="method" value="EM"/>
    <property type="resolution" value="2.66 A"/>
    <property type="chains" value="V=1-414"/>
</dbReference>
<dbReference type="PDB" id="8CSQ">
    <property type="method" value="EM"/>
    <property type="resolution" value="2.54 A"/>
    <property type="chains" value="V=1-414"/>
</dbReference>
<dbReference type="PDB" id="8CSR">
    <property type="method" value="EM"/>
    <property type="resolution" value="2.54 A"/>
    <property type="chains" value="V=1-414"/>
</dbReference>
<dbReference type="PDB" id="8CSS">
    <property type="method" value="EM"/>
    <property type="resolution" value="2.36 A"/>
    <property type="chains" value="V=1-414"/>
</dbReference>
<dbReference type="PDB" id="8CST">
    <property type="method" value="EM"/>
    <property type="resolution" value="2.85 A"/>
    <property type="chains" value="V=1-414"/>
</dbReference>
<dbReference type="PDB" id="8CSU">
    <property type="method" value="EM"/>
    <property type="resolution" value="3.03 A"/>
    <property type="chains" value="V=1-414"/>
</dbReference>
<dbReference type="PDB" id="8K2A">
    <property type="method" value="EM"/>
    <property type="resolution" value="2.90 A"/>
    <property type="chains" value="Sc=1-414"/>
</dbReference>
<dbReference type="PDB" id="8OIR">
    <property type="method" value="EM"/>
    <property type="resolution" value="3.10 A"/>
    <property type="chains" value="AV=1-414"/>
</dbReference>
<dbReference type="PDB" id="8OIS">
    <property type="method" value="EM"/>
    <property type="resolution" value="3.00 A"/>
    <property type="chains" value="AV=1-414"/>
</dbReference>
<dbReference type="PDB" id="8QRK">
    <property type="method" value="EM"/>
    <property type="resolution" value="6.69 A"/>
    <property type="chains" value="V=1-414"/>
</dbReference>
<dbReference type="PDB" id="8QRL">
    <property type="method" value="EM"/>
    <property type="resolution" value="3.34 A"/>
    <property type="chains" value="V=1-414"/>
</dbReference>
<dbReference type="PDB" id="8QRM">
    <property type="method" value="EM"/>
    <property type="resolution" value="3.05 A"/>
    <property type="chains" value="V=1-414"/>
</dbReference>
<dbReference type="PDB" id="8QRN">
    <property type="method" value="EM"/>
    <property type="resolution" value="2.98 A"/>
    <property type="chains" value="V=1-414"/>
</dbReference>
<dbReference type="PDB" id="8RRI">
    <property type="method" value="EM"/>
    <property type="resolution" value="2.40 A"/>
    <property type="chains" value="AV=1-414"/>
</dbReference>
<dbReference type="PDB" id="8XT0">
    <property type="method" value="EM"/>
    <property type="resolution" value="3.20 A"/>
    <property type="chains" value="Sc=1-414"/>
</dbReference>
<dbReference type="PDB" id="8XT2">
    <property type="method" value="EM"/>
    <property type="resolution" value="3.30 A"/>
    <property type="chains" value="Sc=1-414"/>
</dbReference>
<dbReference type="PDBsum" id="3J9M"/>
<dbReference type="PDBsum" id="6NU2"/>
<dbReference type="PDBsum" id="6NU3"/>
<dbReference type="PDBsum" id="6RW4"/>
<dbReference type="PDBsum" id="6RW5"/>
<dbReference type="PDBsum" id="6VLZ"/>
<dbReference type="PDBsum" id="6VMI"/>
<dbReference type="PDBsum" id="6ZM5"/>
<dbReference type="PDBsum" id="6ZM6"/>
<dbReference type="PDBsum" id="6ZS9"/>
<dbReference type="PDBsum" id="6ZSA"/>
<dbReference type="PDBsum" id="6ZSB"/>
<dbReference type="PDBsum" id="6ZSC"/>
<dbReference type="PDBsum" id="6ZSD"/>
<dbReference type="PDBsum" id="6ZSE"/>
<dbReference type="PDBsum" id="6ZSG"/>
<dbReference type="PDBsum" id="7A5F"/>
<dbReference type="PDBsum" id="7A5G"/>
<dbReference type="PDBsum" id="7A5I"/>
<dbReference type="PDBsum" id="7A5K"/>
<dbReference type="PDBsum" id="7L08"/>
<dbReference type="PDBsum" id="7OG4"/>
<dbReference type="PDBsum" id="7P2E"/>
<dbReference type="PDBsum" id="7PNX"/>
<dbReference type="PDBsum" id="7PNY"/>
<dbReference type="PDBsum" id="7PNZ"/>
<dbReference type="PDBsum" id="7PO0"/>
<dbReference type="PDBsum" id="7PO1"/>
<dbReference type="PDBsum" id="7PO2"/>
<dbReference type="PDBsum" id="7PO3"/>
<dbReference type="PDBsum" id="7QI4"/>
<dbReference type="PDBsum" id="7QI5"/>
<dbReference type="PDBsum" id="7QI6"/>
<dbReference type="PDBsum" id="8ANY"/>
<dbReference type="PDBsum" id="8CSP"/>
<dbReference type="PDBsum" id="8CSQ"/>
<dbReference type="PDBsum" id="8CSR"/>
<dbReference type="PDBsum" id="8CSS"/>
<dbReference type="PDBsum" id="8CST"/>
<dbReference type="PDBsum" id="8CSU"/>
<dbReference type="PDBsum" id="8K2A"/>
<dbReference type="PDBsum" id="8OIR"/>
<dbReference type="PDBsum" id="8OIS"/>
<dbReference type="PDBsum" id="8QRK"/>
<dbReference type="PDBsum" id="8QRL"/>
<dbReference type="PDBsum" id="8QRM"/>
<dbReference type="PDBsum" id="8QRN"/>
<dbReference type="PDBsum" id="8RRI"/>
<dbReference type="PDBsum" id="8XT0"/>
<dbReference type="PDBsum" id="8XT2"/>
<dbReference type="EMDB" id="EMD-0514"/>
<dbReference type="EMDB" id="EMD-0515"/>
<dbReference type="EMDB" id="EMD-10021"/>
<dbReference type="EMDB" id="EMD-10022"/>
<dbReference type="EMDB" id="EMD-11278"/>
<dbReference type="EMDB" id="EMD-11279"/>
<dbReference type="EMDB" id="EMD-11390"/>
<dbReference type="EMDB" id="EMD-11391"/>
<dbReference type="EMDB" id="EMD-11392"/>
<dbReference type="EMDB" id="EMD-11393"/>
<dbReference type="EMDB" id="EMD-11394"/>
<dbReference type="EMDB" id="EMD-11395"/>
<dbReference type="EMDB" id="EMD-11397"/>
<dbReference type="EMDB" id="EMD-11641"/>
<dbReference type="EMDB" id="EMD-11642"/>
<dbReference type="EMDB" id="EMD-11644"/>
<dbReference type="EMDB" id="EMD-11646"/>
<dbReference type="EMDB" id="EMD-12877"/>
<dbReference type="EMDB" id="EMD-13170"/>
<dbReference type="EMDB" id="EMD-13555"/>
<dbReference type="EMDB" id="EMD-13556"/>
<dbReference type="EMDB" id="EMD-13557"/>
<dbReference type="EMDB" id="EMD-13558"/>
<dbReference type="EMDB" id="EMD-13559"/>
<dbReference type="EMDB" id="EMD-13560"/>
<dbReference type="EMDB" id="EMD-13561"/>
<dbReference type="EMDB" id="EMD-13980"/>
<dbReference type="EMDB" id="EMD-13981"/>
<dbReference type="EMDB" id="EMD-13982"/>
<dbReference type="EMDB" id="EMD-15544"/>
<dbReference type="EMDB" id="EMD-16897"/>
<dbReference type="EMDB" id="EMD-16898"/>
<dbReference type="EMDB" id="EMD-19460"/>
<dbReference type="EMDB" id="EMD-21233"/>
<dbReference type="EMDB" id="EMD-21242"/>
<dbReference type="EMDB" id="EMD-23096"/>
<dbReference type="EMDB" id="EMD-26966"/>
<dbReference type="EMDB" id="EMD-26967"/>
<dbReference type="EMDB" id="EMD-26968"/>
<dbReference type="EMDB" id="EMD-26969"/>
<dbReference type="EMDB" id="EMD-26970"/>
<dbReference type="EMDB" id="EMD-26971"/>
<dbReference type="EMDB" id="EMD-36836"/>
<dbReference type="EMDB" id="EMD-38632"/>
<dbReference type="EMDB" id="EMD-38634"/>
<dbReference type="SMR" id="Q92552"/>
<dbReference type="BioGRID" id="116731">
    <property type="interactions" value="353"/>
</dbReference>
<dbReference type="ComplexPortal" id="CPX-5225">
    <property type="entry name" value="28S mitochondrial small ribosomal subunit"/>
</dbReference>
<dbReference type="CORUM" id="Q92552"/>
<dbReference type="DIP" id="DIP-44136N"/>
<dbReference type="FunCoup" id="Q92552">
    <property type="interactions" value="2430"/>
</dbReference>
<dbReference type="IntAct" id="Q92552">
    <property type="interactions" value="174"/>
</dbReference>
<dbReference type="MINT" id="Q92552"/>
<dbReference type="STRING" id="9606.ENSP00000426941"/>
<dbReference type="GlyCosmos" id="Q92552">
    <property type="glycosylation" value="1 site, 1 glycan"/>
</dbReference>
<dbReference type="GlyGen" id="Q92552">
    <property type="glycosylation" value="2 sites, 1 O-linked glycan (2 sites)"/>
</dbReference>
<dbReference type="iPTMnet" id="Q92552"/>
<dbReference type="PhosphoSitePlus" id="Q92552"/>
<dbReference type="SwissPalm" id="Q92552"/>
<dbReference type="BioMuta" id="MRPS27"/>
<dbReference type="DMDM" id="209572725"/>
<dbReference type="jPOST" id="Q92552"/>
<dbReference type="MassIVE" id="Q92552"/>
<dbReference type="PaxDb" id="9606-ENSP00000426941"/>
<dbReference type="PeptideAtlas" id="Q92552"/>
<dbReference type="ProteomicsDB" id="4971"/>
<dbReference type="ProteomicsDB" id="75311">
    <molecule id="Q92552-1"/>
</dbReference>
<dbReference type="Pumba" id="Q92552"/>
<dbReference type="Antibodypedia" id="24192">
    <property type="antibodies" value="409 antibodies from 28 providers"/>
</dbReference>
<dbReference type="DNASU" id="23107"/>
<dbReference type="Ensembl" id="ENST00000261413.10">
    <molecule id="Q92552-1"/>
    <property type="protein sequence ID" value="ENSP00000261413.5"/>
    <property type="gene ID" value="ENSG00000113048.19"/>
</dbReference>
<dbReference type="Ensembl" id="ENST00000513900.6">
    <molecule id="Q92552-2"/>
    <property type="protein sequence ID" value="ENSP00000426941.1"/>
    <property type="gene ID" value="ENSG00000113048.19"/>
</dbReference>
<dbReference type="Ensembl" id="ENST00000694989.1">
    <molecule id="Q92552-1"/>
    <property type="protein sequence ID" value="ENSP00000511631.1"/>
    <property type="gene ID" value="ENSG00000113048.19"/>
</dbReference>
<dbReference type="Ensembl" id="ENST00000694990.1">
    <molecule id="Q92552-1"/>
    <property type="protein sequence ID" value="ENSP00000511632.1"/>
    <property type="gene ID" value="ENSG00000113048.19"/>
</dbReference>
<dbReference type="GeneID" id="23107"/>
<dbReference type="KEGG" id="hsa:23107"/>
<dbReference type="MANE-Select" id="ENST00000261413.10">
    <property type="protein sequence ID" value="ENSP00000261413.5"/>
    <property type="RefSeq nucleotide sequence ID" value="NM_015084.3"/>
    <property type="RefSeq protein sequence ID" value="NP_055899.2"/>
</dbReference>
<dbReference type="UCSC" id="uc003kbz.5">
    <molecule id="Q92552-1"/>
    <property type="organism name" value="human"/>
</dbReference>
<dbReference type="AGR" id="HGNC:14512"/>
<dbReference type="CTD" id="23107"/>
<dbReference type="DisGeNET" id="23107"/>
<dbReference type="GeneCards" id="MRPS27"/>
<dbReference type="HGNC" id="HGNC:14512">
    <property type="gene designation" value="MRPS27"/>
</dbReference>
<dbReference type="HPA" id="ENSG00000113048">
    <property type="expression patterns" value="Low tissue specificity"/>
</dbReference>
<dbReference type="MIM" id="611989">
    <property type="type" value="gene"/>
</dbReference>
<dbReference type="neXtProt" id="NX_Q92552"/>
<dbReference type="OpenTargets" id="ENSG00000113048"/>
<dbReference type="PharmGKB" id="PA31015"/>
<dbReference type="VEuPathDB" id="HostDB:ENSG00000113048"/>
<dbReference type="eggNOG" id="KOG4570">
    <property type="taxonomic scope" value="Eukaryota"/>
</dbReference>
<dbReference type="GeneTree" id="ENSGT00390000007246"/>
<dbReference type="InParanoid" id="Q92552"/>
<dbReference type="OMA" id="REDIDHA"/>
<dbReference type="OrthoDB" id="19830at2759"/>
<dbReference type="PAN-GO" id="Q92552">
    <property type="GO annotations" value="1 GO annotation based on evolutionary models"/>
</dbReference>
<dbReference type="PhylomeDB" id="Q92552"/>
<dbReference type="TreeFam" id="TF316446"/>
<dbReference type="PathwayCommons" id="Q92552"/>
<dbReference type="Reactome" id="R-HSA-5368286">
    <property type="pathway name" value="Mitochondrial translation initiation"/>
</dbReference>
<dbReference type="Reactome" id="R-HSA-5389840">
    <property type="pathway name" value="Mitochondrial translation elongation"/>
</dbReference>
<dbReference type="Reactome" id="R-HSA-5419276">
    <property type="pathway name" value="Mitochondrial translation termination"/>
</dbReference>
<dbReference type="SignaLink" id="Q92552"/>
<dbReference type="SIGNOR" id="Q92552"/>
<dbReference type="BioGRID-ORCS" id="23107">
    <property type="hits" value="388 hits in 1176 CRISPR screens"/>
</dbReference>
<dbReference type="CD-CODE" id="232F8A39">
    <property type="entry name" value="P-body"/>
</dbReference>
<dbReference type="CD-CODE" id="5965E019">
    <property type="entry name" value="mtRNA granule"/>
</dbReference>
<dbReference type="ChiTaRS" id="MRPS27">
    <property type="organism name" value="human"/>
</dbReference>
<dbReference type="GenomeRNAi" id="23107"/>
<dbReference type="Pharos" id="Q92552">
    <property type="development level" value="Tbio"/>
</dbReference>
<dbReference type="PRO" id="PR:Q92552"/>
<dbReference type="Proteomes" id="UP000005640">
    <property type="component" value="Chromosome 5"/>
</dbReference>
<dbReference type="RNAct" id="Q92552">
    <property type="molecule type" value="protein"/>
</dbReference>
<dbReference type="Bgee" id="ENSG00000113048">
    <property type="expression patterns" value="Expressed in heart left ventricle and 209 other cell types or tissues"/>
</dbReference>
<dbReference type="ExpressionAtlas" id="Q92552">
    <property type="expression patterns" value="baseline and differential"/>
</dbReference>
<dbReference type="GO" id="GO:0005737">
    <property type="term" value="C:cytoplasm"/>
    <property type="evidence" value="ECO:0000314"/>
    <property type="project" value="UniProtKB"/>
</dbReference>
<dbReference type="GO" id="GO:0005743">
    <property type="term" value="C:mitochondrial inner membrane"/>
    <property type="evidence" value="ECO:0000304"/>
    <property type="project" value="Reactome"/>
</dbReference>
<dbReference type="GO" id="GO:0005763">
    <property type="term" value="C:mitochondrial small ribosomal subunit"/>
    <property type="evidence" value="ECO:0000314"/>
    <property type="project" value="UniProtKB"/>
</dbReference>
<dbReference type="GO" id="GO:0005739">
    <property type="term" value="C:mitochondrion"/>
    <property type="evidence" value="ECO:0000314"/>
    <property type="project" value="HPA"/>
</dbReference>
<dbReference type="GO" id="GO:0005730">
    <property type="term" value="C:nucleolus"/>
    <property type="evidence" value="ECO:0000314"/>
    <property type="project" value="HPA"/>
</dbReference>
<dbReference type="GO" id="GO:0019843">
    <property type="term" value="F:rRNA binding"/>
    <property type="evidence" value="ECO:0000314"/>
    <property type="project" value="UniProtKB"/>
</dbReference>
<dbReference type="GO" id="GO:0000049">
    <property type="term" value="F:tRNA binding"/>
    <property type="evidence" value="ECO:0000314"/>
    <property type="project" value="UniProtKB"/>
</dbReference>
<dbReference type="GO" id="GO:0008283">
    <property type="term" value="P:cell population proliferation"/>
    <property type="evidence" value="ECO:0000315"/>
    <property type="project" value="UniProtKB"/>
</dbReference>
<dbReference type="GO" id="GO:0032543">
    <property type="term" value="P:mitochondrial translation"/>
    <property type="evidence" value="ECO:0000315"/>
    <property type="project" value="UniProtKB"/>
</dbReference>
<dbReference type="GO" id="GO:0006417">
    <property type="term" value="P:regulation of translation"/>
    <property type="evidence" value="ECO:0007669"/>
    <property type="project" value="UniProtKB-KW"/>
</dbReference>
<dbReference type="FunFam" id="1.25.40.10:FF:000232">
    <property type="entry name" value="28S ribosomal protein S27, mitochondrial"/>
    <property type="match status" value="1"/>
</dbReference>
<dbReference type="Gene3D" id="1.25.40.10">
    <property type="entry name" value="Tetratricopeptide repeat domain"/>
    <property type="match status" value="1"/>
</dbReference>
<dbReference type="InterPro" id="IPR034913">
    <property type="entry name" value="mS27/PTCD2"/>
</dbReference>
<dbReference type="InterPro" id="IPR002885">
    <property type="entry name" value="Pentatricopeptide_rpt"/>
</dbReference>
<dbReference type="InterPro" id="IPR019266">
    <property type="entry name" value="Ribosomal_mS27"/>
</dbReference>
<dbReference type="InterPro" id="IPR011990">
    <property type="entry name" value="TPR-like_helical_dom_sf"/>
</dbReference>
<dbReference type="PANTHER" id="PTHR21393">
    <property type="entry name" value="MITOCHONDRIAL 28S RIBOSOMAL PROTEIN S27"/>
    <property type="match status" value="1"/>
</dbReference>
<dbReference type="PANTHER" id="PTHR21393:SF0">
    <property type="entry name" value="SMALL RIBOSOMAL SUBUNIT PROTEIN MS27"/>
    <property type="match status" value="1"/>
</dbReference>
<dbReference type="Pfam" id="PF10037">
    <property type="entry name" value="MRP-S27"/>
    <property type="match status" value="1"/>
</dbReference>
<dbReference type="PROSITE" id="PS51375">
    <property type="entry name" value="PPR"/>
    <property type="match status" value="1"/>
</dbReference>
<evidence type="ECO:0000250" key="1">
    <source>
        <dbReference type="UniProtKB" id="Q8BK72"/>
    </source>
</evidence>
<evidence type="ECO:0000255" key="2"/>
<evidence type="ECO:0000269" key="3">
    <source>
    </source>
</evidence>
<evidence type="ECO:0000269" key="4">
    <source>
    </source>
</evidence>
<evidence type="ECO:0000269" key="5">
    <source>
    </source>
</evidence>
<evidence type="ECO:0000269" key="6">
    <source>
    </source>
</evidence>
<evidence type="ECO:0000269" key="7">
    <source>
    </source>
</evidence>
<evidence type="ECO:0000269" key="8">
    <source>
    </source>
</evidence>
<evidence type="ECO:0000269" key="9">
    <source>
    </source>
</evidence>
<evidence type="ECO:0000303" key="10">
    <source>
    </source>
</evidence>
<evidence type="ECO:0000303" key="11">
    <source>
    </source>
</evidence>
<evidence type="ECO:0000305" key="12"/>
<evidence type="ECO:0000312" key="13">
    <source>
        <dbReference type="HGNC" id="HGNC:14512"/>
    </source>
</evidence>
<evidence type="ECO:0007829" key="14">
    <source>
        <dbReference type="PDB" id="8CSS"/>
    </source>
</evidence>
<proteinExistence type="evidence at protein level"/>
<organism>
    <name type="scientific">Homo sapiens</name>
    <name type="common">Human</name>
    <dbReference type="NCBI Taxonomy" id="9606"/>
    <lineage>
        <taxon>Eukaryota</taxon>
        <taxon>Metazoa</taxon>
        <taxon>Chordata</taxon>
        <taxon>Craniata</taxon>
        <taxon>Vertebrata</taxon>
        <taxon>Euteleostomi</taxon>
        <taxon>Mammalia</taxon>
        <taxon>Eutheria</taxon>
        <taxon>Euarchontoglires</taxon>
        <taxon>Primates</taxon>
        <taxon>Haplorrhini</taxon>
        <taxon>Catarrhini</taxon>
        <taxon>Hominidae</taxon>
        <taxon>Homo</taxon>
    </lineage>
</organism>
<name>RT27_HUMAN</name>
<feature type="transit peptide" description="Mitochondrion" evidence="2">
    <location>
        <begin position="1"/>
        <end position="36"/>
    </location>
</feature>
<feature type="chain" id="PRO_0000087712" description="Small ribosomal subunit protein mS27">
    <location>
        <begin position="37"/>
        <end position="414"/>
    </location>
</feature>
<feature type="repeat" description="PPR 1">
    <location>
        <begin position="105"/>
        <end position="139"/>
    </location>
</feature>
<feature type="repeat" description="PPR 2">
    <location>
        <begin position="140"/>
        <end position="175"/>
    </location>
</feature>
<feature type="coiled-coil region" evidence="2">
    <location>
        <begin position="368"/>
        <end position="414"/>
    </location>
</feature>
<feature type="splice variant" id="VSP_054882" description="In isoform 2." evidence="10">
    <original>K</original>
    <variation>KKGECSSSNPQNYSR</variation>
    <location>
        <position position="94"/>
    </location>
</feature>
<feature type="sequence variant" id="VAR_047026" description="Confirmed at protein level; dbSNP:rs3209157." evidence="3 9">
    <original>G</original>
    <variation>D</variation>
    <location>
        <position position="284"/>
    </location>
</feature>
<feature type="helix" evidence="14">
    <location>
        <begin position="32"/>
        <end position="35"/>
    </location>
</feature>
<feature type="helix" evidence="14">
    <location>
        <begin position="38"/>
        <end position="41"/>
    </location>
</feature>
<feature type="helix" evidence="14">
    <location>
        <begin position="50"/>
        <end position="62"/>
    </location>
</feature>
<feature type="helix" evidence="14">
    <location>
        <begin position="69"/>
        <end position="77"/>
    </location>
</feature>
<feature type="helix" evidence="14">
    <location>
        <begin position="82"/>
        <end position="96"/>
    </location>
</feature>
<feature type="helix" evidence="14">
    <location>
        <begin position="101"/>
        <end position="103"/>
    </location>
</feature>
<feature type="helix" evidence="14">
    <location>
        <begin position="106"/>
        <end position="118"/>
    </location>
</feature>
<feature type="helix" evidence="14">
    <location>
        <begin position="122"/>
        <end position="130"/>
    </location>
</feature>
<feature type="helix" evidence="14">
    <location>
        <begin position="132"/>
        <end position="135"/>
    </location>
</feature>
<feature type="helix" evidence="14">
    <location>
        <begin position="141"/>
        <end position="153"/>
    </location>
</feature>
<feature type="helix" evidence="14">
    <location>
        <begin position="157"/>
        <end position="170"/>
    </location>
</feature>
<feature type="helix" evidence="14">
    <location>
        <begin position="176"/>
        <end position="190"/>
    </location>
</feature>
<feature type="helix" evidence="14">
    <location>
        <begin position="198"/>
        <end position="213"/>
    </location>
</feature>
<feature type="helix" evidence="14">
    <location>
        <begin position="218"/>
        <end position="238"/>
    </location>
</feature>
<feature type="helix" evidence="14">
    <location>
        <begin position="240"/>
        <end position="244"/>
    </location>
</feature>
<feature type="strand" evidence="14">
    <location>
        <begin position="247"/>
        <end position="249"/>
    </location>
</feature>
<feature type="helix" evidence="14">
    <location>
        <begin position="255"/>
        <end position="267"/>
    </location>
</feature>
<feature type="helix" evidence="14">
    <location>
        <begin position="277"/>
        <end position="290"/>
    </location>
</feature>
<feature type="helix" evidence="14">
    <location>
        <begin position="323"/>
        <end position="344"/>
    </location>
</feature>
<feature type="helix" evidence="14">
    <location>
        <begin position="352"/>
        <end position="404"/>
    </location>
</feature>
<accession>Q92552</accession>
<accession>B4DRT2</accession>
<accession>Q6P1S1</accession>
<sequence length="414" mass="47611">MAASIVRRGMLLARQVVLPQLSPAGKRYLLSSAYVDSHKWEAREKEHYCLADLASLMDKTFERKLPVSSLTISRLIDNISSREEIDHAEYYLYKFRHSPNCWYLRNWTIHTWIRQCLKYDAQDKALYTLVNKVQYGIFPDNFTFNLLMDSFIKKENYKDALSVVFEVMMQEAFEVPSTQLLSLYVLFHCLAKKTDFSWEEERNFGASLLLPGLKQKNSVGFSSQLYGYALLGKVELQQGLRAVYHNMPLIWKPGYLDRALQVMEKVAASPEDIKLCREALDVLGAVLKALTSADGASEEQSQNDEDNQGSEKLVEQLDIEETEQSKLPQYLERFKALHSKLQALGKIESEGLLSLTTQLVKEKLSTCEAEDIATYEQNLQQWHLDLVQLIQREQQQREQAKQEYQAQKAAKASA</sequence>
<comment type="function">
    <text evidence="5 7">RNA-binding component of the mitochondrial small ribosomal subunit (mt-SSU) that plays a role in mitochondrial protein synthesis (PubMed:22841715). Stimulates mitochondrial mRNA translation of subunit components of the mitochondrial electron transport chain (PubMed:22841715). Binds to the mitochondrial 12S rRNA (12S mt-rRNA) and tRNA(Glu) (PubMed:22841715). Involved also in positive regulation of cell proliferation and tumor cell growth (PubMed:28714366).</text>
</comment>
<comment type="subunit">
    <text evidence="1 4 5 6 8">Component of the mitochondrial small ribosomal subunit (mt-SSU) (PubMed:22841715, PubMed:25838379). Mature mammalian 55S mitochondrial ribosomes consist of a small (28S) and a large (39S) subunit (PubMed:25838379). The 28S small subunit contains a 12S ribosomal RNA (12S mt-rRNA) and 30 different proteins (PubMed:25838379). The 39S large subunit contains a 16S rRNA (16S mt-rRNA), a copy of mitochondrial valine transfer RNA (mt-tRNA(Val)), which plays an integral structural role, and 52 different proteins (PubMed:25838379). Interacts with NOA1 (PubMed:19103604). Interacts with MIEF1 upstream open reading frame protein (PubMed:30215512). Interacts with METTL17 (By similarity).</text>
</comment>
<comment type="interaction">
    <interactant intactId="EBI-2211879">
        <id>Q92552</id>
    </interactant>
    <interactant intactId="EBI-349854">
        <id>P13569</id>
        <label>CFTR</label>
    </interactant>
    <organismsDiffer>false</organismsDiffer>
    <experiments>5</experiments>
</comment>
<comment type="interaction">
    <interactant intactId="EBI-2211879">
        <id>Q92552</id>
    </interactant>
    <interactant intactId="EBI-750085">
        <id>Q9Y676</id>
        <label>MRPS18B</label>
    </interactant>
    <organismsDiffer>false</organismsDiffer>
    <experiments>7</experiments>
</comment>
<comment type="interaction">
    <interactant intactId="EBI-10278573">
        <id>Q92552-2</id>
    </interactant>
    <interactant intactId="EBI-10172876">
        <id>Q7Z6G3-2</id>
        <label>NECAB2</label>
    </interactant>
    <organismsDiffer>false</organismsDiffer>
    <experiments>3</experiments>
</comment>
<comment type="subcellular location">
    <subcellularLocation>
        <location evidence="7">Cytoplasm</location>
    </subcellularLocation>
    <subcellularLocation>
        <location evidence="5 6">Mitochondrion</location>
    </subcellularLocation>
</comment>
<comment type="alternative products">
    <event type="alternative splicing"/>
    <isoform>
        <id>Q92552-1</id>
        <name>1</name>
        <sequence type="displayed"/>
    </isoform>
    <isoform>
        <id>Q92552-2</id>
        <name>2</name>
        <sequence type="described" ref="VSP_054882"/>
    </isoform>
</comment>
<comment type="tissue specificity">
    <text evidence="5 7">Overexpressed in hepatocellular carcinoma tissues compared with adjacent non-tumoral liver tissues (at protein level) (PubMed:28714366). Ubiquitous (PubMed:22841715).</text>
</comment>
<comment type="similarity">
    <text evidence="12">Belongs to the mitochondrion-specific ribosomal protein mS27 family.</text>
</comment>
<comment type="sequence caution" evidence="12">
    <conflict type="erroneous initiation">
        <sequence resource="EMBL-CDS" id="BAA13394"/>
    </conflict>
</comment>
<reference key="1">
    <citation type="journal article" date="1996" name="DNA Res.">
        <title>Prediction of the coding sequences of unidentified human genes. VI. The coding sequences of 80 new genes (KIAA0201-KIAA0280) deduced by analysis of cDNA clones from cell line KG-1 and brain.</title>
        <authorList>
            <person name="Nagase T."/>
            <person name="Seki N."/>
            <person name="Ishikawa K."/>
            <person name="Ohira M."/>
            <person name="Kawarabayasi Y."/>
            <person name="Ohara O."/>
            <person name="Tanaka A."/>
            <person name="Kotani H."/>
            <person name="Miyajima N."/>
            <person name="Nomura N."/>
        </authorList>
    </citation>
    <scope>NUCLEOTIDE SEQUENCE [LARGE SCALE MRNA] (ISOFORM 1)</scope>
    <scope>VARIANT ASP-284</scope>
    <source>
        <tissue>Bone marrow</tissue>
    </source>
</reference>
<reference key="2">
    <citation type="journal article" date="2004" name="Nat. Genet.">
        <title>Complete sequencing and characterization of 21,243 full-length human cDNAs.</title>
        <authorList>
            <person name="Ota T."/>
            <person name="Suzuki Y."/>
            <person name="Nishikawa T."/>
            <person name="Otsuki T."/>
            <person name="Sugiyama T."/>
            <person name="Irie R."/>
            <person name="Wakamatsu A."/>
            <person name="Hayashi K."/>
            <person name="Sato H."/>
            <person name="Nagai K."/>
            <person name="Kimura K."/>
            <person name="Makita H."/>
            <person name="Sekine M."/>
            <person name="Obayashi M."/>
            <person name="Nishi T."/>
            <person name="Shibahara T."/>
            <person name="Tanaka T."/>
            <person name="Ishii S."/>
            <person name="Yamamoto J."/>
            <person name="Saito K."/>
            <person name="Kawai Y."/>
            <person name="Isono Y."/>
            <person name="Nakamura Y."/>
            <person name="Nagahari K."/>
            <person name="Murakami K."/>
            <person name="Yasuda T."/>
            <person name="Iwayanagi T."/>
            <person name="Wagatsuma M."/>
            <person name="Shiratori A."/>
            <person name="Sudo H."/>
            <person name="Hosoiri T."/>
            <person name="Kaku Y."/>
            <person name="Kodaira H."/>
            <person name="Kondo H."/>
            <person name="Sugawara M."/>
            <person name="Takahashi M."/>
            <person name="Kanda K."/>
            <person name="Yokoi T."/>
            <person name="Furuya T."/>
            <person name="Kikkawa E."/>
            <person name="Omura Y."/>
            <person name="Abe K."/>
            <person name="Kamihara K."/>
            <person name="Katsuta N."/>
            <person name="Sato K."/>
            <person name="Tanikawa M."/>
            <person name="Yamazaki M."/>
            <person name="Ninomiya K."/>
            <person name="Ishibashi T."/>
            <person name="Yamashita H."/>
            <person name="Murakawa K."/>
            <person name="Fujimori K."/>
            <person name="Tanai H."/>
            <person name="Kimata M."/>
            <person name="Watanabe M."/>
            <person name="Hiraoka S."/>
            <person name="Chiba Y."/>
            <person name="Ishida S."/>
            <person name="Ono Y."/>
            <person name="Takiguchi S."/>
            <person name="Watanabe S."/>
            <person name="Yosida M."/>
            <person name="Hotuta T."/>
            <person name="Kusano J."/>
            <person name="Kanehori K."/>
            <person name="Takahashi-Fujii A."/>
            <person name="Hara H."/>
            <person name="Tanase T.-O."/>
            <person name="Nomura Y."/>
            <person name="Togiya S."/>
            <person name="Komai F."/>
            <person name="Hara R."/>
            <person name="Takeuchi K."/>
            <person name="Arita M."/>
            <person name="Imose N."/>
            <person name="Musashino K."/>
            <person name="Yuuki H."/>
            <person name="Oshima A."/>
            <person name="Sasaki N."/>
            <person name="Aotsuka S."/>
            <person name="Yoshikawa Y."/>
            <person name="Matsunawa H."/>
            <person name="Ichihara T."/>
            <person name="Shiohata N."/>
            <person name="Sano S."/>
            <person name="Moriya S."/>
            <person name="Momiyama H."/>
            <person name="Satoh N."/>
            <person name="Takami S."/>
            <person name="Terashima Y."/>
            <person name="Suzuki O."/>
            <person name="Nakagawa S."/>
            <person name="Senoh A."/>
            <person name="Mizoguchi H."/>
            <person name="Goto Y."/>
            <person name="Shimizu F."/>
            <person name="Wakebe H."/>
            <person name="Hishigaki H."/>
            <person name="Watanabe T."/>
            <person name="Sugiyama A."/>
            <person name="Takemoto M."/>
            <person name="Kawakami B."/>
            <person name="Yamazaki M."/>
            <person name="Watanabe K."/>
            <person name="Kumagai A."/>
            <person name="Itakura S."/>
            <person name="Fukuzumi Y."/>
            <person name="Fujimori Y."/>
            <person name="Komiyama M."/>
            <person name="Tashiro H."/>
            <person name="Tanigami A."/>
            <person name="Fujiwara T."/>
            <person name="Ono T."/>
            <person name="Yamada K."/>
            <person name="Fujii Y."/>
            <person name="Ozaki K."/>
            <person name="Hirao M."/>
            <person name="Ohmori Y."/>
            <person name="Kawabata A."/>
            <person name="Hikiji T."/>
            <person name="Kobatake N."/>
            <person name="Inagaki H."/>
            <person name="Ikema Y."/>
            <person name="Okamoto S."/>
            <person name="Okitani R."/>
            <person name="Kawakami T."/>
            <person name="Noguchi S."/>
            <person name="Itoh T."/>
            <person name="Shigeta K."/>
            <person name="Senba T."/>
            <person name="Matsumura K."/>
            <person name="Nakajima Y."/>
            <person name="Mizuno T."/>
            <person name="Morinaga M."/>
            <person name="Sasaki M."/>
            <person name="Togashi T."/>
            <person name="Oyama M."/>
            <person name="Hata H."/>
            <person name="Watanabe M."/>
            <person name="Komatsu T."/>
            <person name="Mizushima-Sugano J."/>
            <person name="Satoh T."/>
            <person name="Shirai Y."/>
            <person name="Takahashi Y."/>
            <person name="Nakagawa K."/>
            <person name="Okumura K."/>
            <person name="Nagase T."/>
            <person name="Nomura N."/>
            <person name="Kikuchi H."/>
            <person name="Masuho Y."/>
            <person name="Yamashita R."/>
            <person name="Nakai K."/>
            <person name="Yada T."/>
            <person name="Nakamura Y."/>
            <person name="Ohara O."/>
            <person name="Isogai T."/>
            <person name="Sugano S."/>
        </authorList>
    </citation>
    <scope>NUCLEOTIDE SEQUENCE [LARGE SCALE MRNA] (ISOFORM 2)</scope>
    <source>
        <tissue>Tongue</tissue>
    </source>
</reference>
<reference key="3">
    <citation type="journal article" date="2004" name="Nature">
        <title>The DNA sequence and comparative analysis of human chromosome 5.</title>
        <authorList>
            <person name="Schmutz J."/>
            <person name="Martin J."/>
            <person name="Terry A."/>
            <person name="Couronne O."/>
            <person name="Grimwood J."/>
            <person name="Lowry S."/>
            <person name="Gordon L.A."/>
            <person name="Scott D."/>
            <person name="Xie G."/>
            <person name="Huang W."/>
            <person name="Hellsten U."/>
            <person name="Tran-Gyamfi M."/>
            <person name="She X."/>
            <person name="Prabhakar S."/>
            <person name="Aerts A."/>
            <person name="Altherr M."/>
            <person name="Bajorek E."/>
            <person name="Black S."/>
            <person name="Branscomb E."/>
            <person name="Caoile C."/>
            <person name="Challacombe J.F."/>
            <person name="Chan Y.M."/>
            <person name="Denys M."/>
            <person name="Detter J.C."/>
            <person name="Escobar J."/>
            <person name="Flowers D."/>
            <person name="Fotopulos D."/>
            <person name="Glavina T."/>
            <person name="Gomez M."/>
            <person name="Gonzales E."/>
            <person name="Goodstein D."/>
            <person name="Grigoriev I."/>
            <person name="Groza M."/>
            <person name="Hammon N."/>
            <person name="Hawkins T."/>
            <person name="Haydu L."/>
            <person name="Israni S."/>
            <person name="Jett J."/>
            <person name="Kadner K."/>
            <person name="Kimball H."/>
            <person name="Kobayashi A."/>
            <person name="Lopez F."/>
            <person name="Lou Y."/>
            <person name="Martinez D."/>
            <person name="Medina C."/>
            <person name="Morgan J."/>
            <person name="Nandkeshwar R."/>
            <person name="Noonan J.P."/>
            <person name="Pitluck S."/>
            <person name="Pollard M."/>
            <person name="Predki P."/>
            <person name="Priest J."/>
            <person name="Ramirez L."/>
            <person name="Retterer J."/>
            <person name="Rodriguez A."/>
            <person name="Rogers S."/>
            <person name="Salamov A."/>
            <person name="Salazar A."/>
            <person name="Thayer N."/>
            <person name="Tice H."/>
            <person name="Tsai M."/>
            <person name="Ustaszewska A."/>
            <person name="Vo N."/>
            <person name="Wheeler J."/>
            <person name="Wu K."/>
            <person name="Yang J."/>
            <person name="Dickson M."/>
            <person name="Cheng J.-F."/>
            <person name="Eichler E.E."/>
            <person name="Olsen A."/>
            <person name="Pennacchio L.A."/>
            <person name="Rokhsar D.S."/>
            <person name="Richardson P."/>
            <person name="Lucas S.M."/>
            <person name="Myers R.M."/>
            <person name="Rubin E.M."/>
        </authorList>
    </citation>
    <scope>NUCLEOTIDE SEQUENCE [LARGE SCALE GENOMIC DNA]</scope>
</reference>
<reference key="4">
    <citation type="submission" date="2005-07" db="EMBL/GenBank/DDBJ databases">
        <authorList>
            <person name="Mural R.J."/>
            <person name="Istrail S."/>
            <person name="Sutton G.G."/>
            <person name="Florea L."/>
            <person name="Halpern A.L."/>
            <person name="Mobarry C.M."/>
            <person name="Lippert R."/>
            <person name="Walenz B."/>
            <person name="Shatkay H."/>
            <person name="Dew I."/>
            <person name="Miller J.R."/>
            <person name="Flanigan M.J."/>
            <person name="Edwards N.J."/>
            <person name="Bolanos R."/>
            <person name="Fasulo D."/>
            <person name="Halldorsson B.V."/>
            <person name="Hannenhalli S."/>
            <person name="Turner R."/>
            <person name="Yooseph S."/>
            <person name="Lu F."/>
            <person name="Nusskern D.R."/>
            <person name="Shue B.C."/>
            <person name="Zheng X.H."/>
            <person name="Zhong F."/>
            <person name="Delcher A.L."/>
            <person name="Huson D.H."/>
            <person name="Kravitz S.A."/>
            <person name="Mouchard L."/>
            <person name="Reinert K."/>
            <person name="Remington K.A."/>
            <person name="Clark A.G."/>
            <person name="Waterman M.S."/>
            <person name="Eichler E.E."/>
            <person name="Adams M.D."/>
            <person name="Hunkapiller M.W."/>
            <person name="Myers E.W."/>
            <person name="Venter J.C."/>
        </authorList>
    </citation>
    <scope>NUCLEOTIDE SEQUENCE [LARGE SCALE GENOMIC DNA]</scope>
</reference>
<reference key="5">
    <citation type="journal article" date="2004" name="Genome Res.">
        <title>The status, quality, and expansion of the NIH full-length cDNA project: the Mammalian Gene Collection (MGC).</title>
        <authorList>
            <consortium name="The MGC Project Team"/>
        </authorList>
    </citation>
    <scope>NUCLEOTIDE SEQUENCE [LARGE SCALE MRNA] (ISOFORM 1)</scope>
    <source>
        <tissue>Lung</tissue>
    </source>
</reference>
<reference key="6">
    <citation type="journal article" date="2001" name="Protein Sci.">
        <title>Identification of four proteins from the small subunit of the mammalian mitochondrial ribosome using a proteomics approach.</title>
        <authorList>
            <person name="Koc E.C."/>
            <person name="Burkhart W."/>
            <person name="Blackburn K."/>
            <person name="Koc H."/>
            <person name="Moseley A."/>
            <person name="Spremulli L.L."/>
        </authorList>
    </citation>
    <scope>IDENTIFICATION</scope>
</reference>
<reference key="7">
    <citation type="journal article" date="2009" name="J. Biol. Chem.">
        <title>hNOA1 interacts with complex I and DAP3 and regulates mitochondrial respiration and apoptosis.</title>
        <authorList>
            <person name="Tang T."/>
            <person name="Zheng B."/>
            <person name="Chen S.H."/>
            <person name="Murphy A.N."/>
            <person name="Kudlicka K."/>
            <person name="Zhou H."/>
            <person name="Farquhar M.G."/>
        </authorList>
    </citation>
    <scope>INTERACTION WITH NOA1</scope>
</reference>
<reference key="8">
    <citation type="journal article" date="2011" name="BMC Syst. Biol.">
        <title>Initial characterization of the human central proteome.</title>
        <authorList>
            <person name="Burkard T.R."/>
            <person name="Planyavsky M."/>
            <person name="Kaupe I."/>
            <person name="Breitwieser F.P."/>
            <person name="Buerckstuemmer T."/>
            <person name="Bennett K.L."/>
            <person name="Superti-Furga G."/>
            <person name="Colinge J."/>
        </authorList>
    </citation>
    <scope>IDENTIFICATION BY MASS SPECTROMETRY [LARGE SCALE ANALYSIS]</scope>
</reference>
<reference key="9">
    <citation type="journal article" date="2012" name="FEBS Lett.">
        <title>MRPS27 is a pentatricopeptide repeat domain protein required for the translation of mitochondrially encoded proteins.</title>
        <authorList>
            <person name="Davies S.M."/>
            <person name="Lopez Sanchez M.I."/>
            <person name="Narsai R."/>
            <person name="Shearwood A.M."/>
            <person name="Razif M.F."/>
            <person name="Small I.D."/>
            <person name="Whelan J."/>
            <person name="Rackham O."/>
            <person name="Filipovska A."/>
        </authorList>
    </citation>
    <scope>FUNCTION IN MITOCHONDRIAL MRNA TRANSLATION</scope>
    <scope>ASSOCIATION WITH SMALL SUBUNIT OF MITOCHONDRIAL RIBOSOMES</scope>
    <scope>BINDS TO RRNA AND TRNA</scope>
    <scope>SUBCELLULAR LOCATION</scope>
    <scope>TISSUE SPECIFICITY</scope>
</reference>
<reference key="10">
    <citation type="journal article" date="2014" name="J. Proteomics">
        <title>An enzyme assisted RP-RPLC approach for in-depth analysis of human liver phosphoproteome.</title>
        <authorList>
            <person name="Bian Y."/>
            <person name="Song C."/>
            <person name="Cheng K."/>
            <person name="Dong M."/>
            <person name="Wang F."/>
            <person name="Huang J."/>
            <person name="Sun D."/>
            <person name="Wang L."/>
            <person name="Ye M."/>
            <person name="Zou H."/>
        </authorList>
    </citation>
    <scope>IDENTIFICATION BY MASS SPECTROMETRY [LARGE SCALE ANALYSIS]</scope>
    <source>
        <tissue>Liver</tissue>
    </source>
</reference>
<reference key="11">
    <citation type="journal article" date="2015" name="Proteomics">
        <title>N-terminome analysis of the human mitochondrial proteome.</title>
        <authorList>
            <person name="Vaca Jacome A.S."/>
            <person name="Rabilloud T."/>
            <person name="Schaeffer-Reiss C."/>
            <person name="Rompais M."/>
            <person name="Ayoub D."/>
            <person name="Lane L."/>
            <person name="Bairoch A."/>
            <person name="Van Dorsselaer A."/>
            <person name="Carapito C."/>
        </authorList>
    </citation>
    <scope>IDENTIFICATION BY MASS SPECTROMETRY [LARGE SCALE ANALYSIS]</scope>
</reference>
<reference key="12">
    <citation type="journal article" date="2017" name="Tumor Biol.">
        <title>High MRPS23 expression contributes to hepatocellular carcinoma proliferation and indicates poor survival outcomes.</title>
        <authorList>
            <person name="Pu M."/>
            <person name="Wang J."/>
            <person name="Huang Q."/>
            <person name="Zhao G."/>
            <person name="Xia C."/>
            <person name="Shang R."/>
            <person name="Zhang Z."/>
            <person name="Bian Z."/>
            <person name="Yang X."/>
            <person name="Tao K."/>
        </authorList>
    </citation>
    <scope>FUNCTION</scope>
    <scope>SUBCELLULAR LOCATION</scope>
    <scope>TISSUE SPECIFICITY</scope>
</reference>
<reference key="13">
    <citation type="journal article" date="2018" name="Biochemistry">
        <title>MIEF1 microprotein regulates mitochondrial translation.</title>
        <authorList>
            <person name="Rathore A."/>
            <person name="Chu Q."/>
            <person name="Tan D."/>
            <person name="Martinez T.F."/>
            <person name="Donaldson C.J."/>
            <person name="Diedrich J.K."/>
            <person name="Yates J.R. III"/>
            <person name="Saghatelian A."/>
        </authorList>
    </citation>
    <scope>INTERACTION WITH MIEF1 UPSTREAM OPEN READING FRAME PROTEIN</scope>
</reference>
<reference key="14">
    <citation type="journal article" date="2015" name="Science">
        <title>Ribosome. The structure of the human mitochondrial ribosome.</title>
        <authorList>
            <person name="Amunts A."/>
            <person name="Brown A."/>
            <person name="Toots J."/>
            <person name="Scheres S.H."/>
            <person name="Ramakrishnan V."/>
        </authorList>
    </citation>
    <scope>STRUCTURE BY ELECTRON MICROSCOPY (3.50 ANGSTROMS)</scope>
    <scope>SUBUNIT</scope>
</reference>
<reference key="15">
    <citation type="journal article" date="2007" name="J. Proteome Res.">
        <title>Detection and validation of non-synonymous coding SNPs from orthogonal analysis of shotgun proteomics data.</title>
        <authorList>
            <person name="Bunger M.K."/>
            <person name="Cargile B.J."/>
            <person name="Sevinsky J.R."/>
            <person name="Deyanova E."/>
            <person name="Yates N.A."/>
            <person name="Hendrickson R.C."/>
            <person name="Stephenson J.L. Jr."/>
        </authorList>
    </citation>
    <scope>VARIANT ASP-284</scope>
    <scope>IDENTIFICATION BY MASS SPECTROMETRY</scope>
</reference>
<gene>
    <name evidence="13" type="primary">MRPS27</name>
    <name type="synonym">KIAA0264</name>
</gene>
<keyword id="KW-0002">3D-structure</keyword>
<keyword id="KW-0025">Alternative splicing</keyword>
<keyword id="KW-0175">Coiled coil</keyword>
<keyword id="KW-0963">Cytoplasm</keyword>
<keyword id="KW-0496">Mitochondrion</keyword>
<keyword id="KW-1267">Proteomics identification</keyword>
<keyword id="KW-1185">Reference proteome</keyword>
<keyword id="KW-0677">Repeat</keyword>
<keyword id="KW-0687">Ribonucleoprotein</keyword>
<keyword id="KW-0689">Ribosomal protein</keyword>
<keyword id="KW-0694">RNA-binding</keyword>
<keyword id="KW-0699">rRNA-binding</keyword>
<keyword id="KW-0809">Transit peptide</keyword>
<keyword id="KW-0810">Translation regulation</keyword>
<keyword id="KW-0820">tRNA-binding</keyword>
<protein>
    <recommendedName>
        <fullName evidence="11">Small ribosomal subunit protein mS27</fullName>
    </recommendedName>
    <alternativeName>
        <fullName evidence="12">28S ribosomal protein S27, mitochondrial</fullName>
        <shortName>MRP-S27</shortName>
        <shortName>S27mt</shortName>
    </alternativeName>
    <alternativeName>
        <fullName evidence="13">Mitochondrial ribosomal protein S27</fullName>
    </alternativeName>
</protein>